<name>TRUB_BARBK</name>
<evidence type="ECO:0000255" key="1">
    <source>
        <dbReference type="HAMAP-Rule" id="MF_01080"/>
    </source>
</evidence>
<keyword id="KW-0413">Isomerase</keyword>
<keyword id="KW-0819">tRNA processing</keyword>
<protein>
    <recommendedName>
        <fullName evidence="1">tRNA pseudouridine synthase B</fullName>
        <ecNumber evidence="1">5.4.99.25</ecNumber>
    </recommendedName>
    <alternativeName>
        <fullName evidence="1">tRNA pseudouridine(55) synthase</fullName>
        <shortName evidence="1">Psi55 synthase</shortName>
    </alternativeName>
    <alternativeName>
        <fullName evidence="1">tRNA pseudouridylate synthase</fullName>
    </alternativeName>
    <alternativeName>
        <fullName evidence="1">tRNA-uridine isomerase</fullName>
    </alternativeName>
</protein>
<feature type="chain" id="PRO_1000084551" description="tRNA pseudouridine synthase B">
    <location>
        <begin position="1"/>
        <end position="320"/>
    </location>
</feature>
<feature type="active site" description="Nucleophile" evidence="1">
    <location>
        <position position="49"/>
    </location>
</feature>
<comment type="function">
    <text evidence="1">Responsible for synthesis of pseudouridine from uracil-55 in the psi GC loop of transfer RNAs.</text>
</comment>
<comment type="catalytic activity">
    <reaction evidence="1">
        <text>uridine(55) in tRNA = pseudouridine(55) in tRNA</text>
        <dbReference type="Rhea" id="RHEA:42532"/>
        <dbReference type="Rhea" id="RHEA-COMP:10101"/>
        <dbReference type="Rhea" id="RHEA-COMP:10102"/>
        <dbReference type="ChEBI" id="CHEBI:65314"/>
        <dbReference type="ChEBI" id="CHEBI:65315"/>
        <dbReference type="EC" id="5.4.99.25"/>
    </reaction>
</comment>
<comment type="similarity">
    <text evidence="1">Belongs to the pseudouridine synthase TruB family. Type 1 subfamily.</text>
</comment>
<sequence>MSRQSKKKGRSISGWVILDKPKAMKSTEAVSKIKRLFNAQKAGHAGTLDPLASGLLPIALGEATKTVPYVMEGTKTYHFHVAWGEERSTDDLEGVVTKTSSKRPTQEEIFALLPKYTGVILQTPPQFSAIKIAGNRAYDLAREGEIFEIPPRQVKIDSLELIGTTDQGYSIFEMTCGKGTYVRSLARDMGHDLGCYGYIADLRRTAVAPFCENDLITWDALKAAIPHENTTDENCIPLKQNFSTLDGLLIETDVALKCLAHYTLNQIQAQRVRMGNSILLCDQNMPTSNIDICVTYKAQLLAIGTIDQNQFKPKRIFTTL</sequence>
<organism>
    <name type="scientific">Bartonella bacilliformis (strain ATCC 35685 / KC583 / Herrer 020/F12,63)</name>
    <dbReference type="NCBI Taxonomy" id="360095"/>
    <lineage>
        <taxon>Bacteria</taxon>
        <taxon>Pseudomonadati</taxon>
        <taxon>Pseudomonadota</taxon>
        <taxon>Alphaproteobacteria</taxon>
        <taxon>Hyphomicrobiales</taxon>
        <taxon>Bartonellaceae</taxon>
        <taxon>Bartonella</taxon>
    </lineage>
</organism>
<dbReference type="EC" id="5.4.99.25" evidence="1"/>
<dbReference type="EMBL" id="CP000524">
    <property type="protein sequence ID" value="ABM45296.1"/>
    <property type="molecule type" value="Genomic_DNA"/>
</dbReference>
<dbReference type="RefSeq" id="WP_005767988.1">
    <property type="nucleotide sequence ID" value="NC_008783.1"/>
</dbReference>
<dbReference type="SMR" id="A1UU52"/>
<dbReference type="STRING" id="360095.BARBAKC583_1256"/>
<dbReference type="GeneID" id="4683862"/>
<dbReference type="KEGG" id="bbk:BARBAKC583_1256"/>
<dbReference type="PATRIC" id="fig|360095.6.peg.1232"/>
<dbReference type="eggNOG" id="COG0130">
    <property type="taxonomic scope" value="Bacteria"/>
</dbReference>
<dbReference type="HOGENOM" id="CLU_032087_0_3_5"/>
<dbReference type="OrthoDB" id="9802309at2"/>
<dbReference type="Proteomes" id="UP000000643">
    <property type="component" value="Chromosome"/>
</dbReference>
<dbReference type="GO" id="GO:0003723">
    <property type="term" value="F:RNA binding"/>
    <property type="evidence" value="ECO:0007669"/>
    <property type="project" value="InterPro"/>
</dbReference>
<dbReference type="GO" id="GO:0160148">
    <property type="term" value="F:tRNA pseudouridine(55) synthase activity"/>
    <property type="evidence" value="ECO:0007669"/>
    <property type="project" value="UniProtKB-EC"/>
</dbReference>
<dbReference type="GO" id="GO:1990481">
    <property type="term" value="P:mRNA pseudouridine synthesis"/>
    <property type="evidence" value="ECO:0007669"/>
    <property type="project" value="TreeGrafter"/>
</dbReference>
<dbReference type="GO" id="GO:0031119">
    <property type="term" value="P:tRNA pseudouridine synthesis"/>
    <property type="evidence" value="ECO:0007669"/>
    <property type="project" value="UniProtKB-UniRule"/>
</dbReference>
<dbReference type="CDD" id="cd02573">
    <property type="entry name" value="PseudoU_synth_EcTruB"/>
    <property type="match status" value="1"/>
</dbReference>
<dbReference type="Gene3D" id="3.30.2350.10">
    <property type="entry name" value="Pseudouridine synthase"/>
    <property type="match status" value="1"/>
</dbReference>
<dbReference type="HAMAP" id="MF_01080">
    <property type="entry name" value="TruB_bact"/>
    <property type="match status" value="1"/>
</dbReference>
<dbReference type="InterPro" id="IPR020103">
    <property type="entry name" value="PsdUridine_synth_cat_dom_sf"/>
</dbReference>
<dbReference type="InterPro" id="IPR002501">
    <property type="entry name" value="PsdUridine_synth_N"/>
</dbReference>
<dbReference type="InterPro" id="IPR014780">
    <property type="entry name" value="tRNA_psdUridine_synth_TruB"/>
</dbReference>
<dbReference type="InterPro" id="IPR032819">
    <property type="entry name" value="TruB_C"/>
</dbReference>
<dbReference type="NCBIfam" id="TIGR00431">
    <property type="entry name" value="TruB"/>
    <property type="match status" value="1"/>
</dbReference>
<dbReference type="PANTHER" id="PTHR13767:SF2">
    <property type="entry name" value="PSEUDOURIDYLATE SYNTHASE TRUB1"/>
    <property type="match status" value="1"/>
</dbReference>
<dbReference type="PANTHER" id="PTHR13767">
    <property type="entry name" value="TRNA-PSEUDOURIDINE SYNTHASE"/>
    <property type="match status" value="1"/>
</dbReference>
<dbReference type="Pfam" id="PF16198">
    <property type="entry name" value="TruB_C_2"/>
    <property type="match status" value="1"/>
</dbReference>
<dbReference type="Pfam" id="PF01509">
    <property type="entry name" value="TruB_N"/>
    <property type="match status" value="1"/>
</dbReference>
<dbReference type="SUPFAM" id="SSF55120">
    <property type="entry name" value="Pseudouridine synthase"/>
    <property type="match status" value="1"/>
</dbReference>
<gene>
    <name evidence="1" type="primary">truB</name>
    <name type="ordered locus">BARBAKC583_1256</name>
</gene>
<proteinExistence type="inferred from homology"/>
<reference key="1">
    <citation type="submission" date="2006-12" db="EMBL/GenBank/DDBJ databases">
        <authorList>
            <person name="Hendrix L."/>
            <person name="Mohamoud Y."/>
            <person name="Radune D."/>
            <person name="Shvartsbeyn A."/>
            <person name="Daugherty S."/>
            <person name="Dodson R."/>
            <person name="Durkin A.S."/>
            <person name="Harkins D."/>
            <person name="Huot H."/>
            <person name="Kothari S.P."/>
            <person name="Madupu R."/>
            <person name="Li J."/>
            <person name="Nelson W.C."/>
            <person name="Shrivastava S."/>
            <person name="Giglio M.G."/>
            <person name="Haft D."/>
            <person name="Selengut J."/>
            <person name="Fraser-Ligget C."/>
            <person name="Seshadri R."/>
        </authorList>
    </citation>
    <scope>NUCLEOTIDE SEQUENCE [LARGE SCALE GENOMIC DNA]</scope>
    <source>
        <strain>ATCC 35685 / KC583 / Herrer 020/F12,63</strain>
    </source>
</reference>
<accession>A1UU52</accession>